<organism>
    <name type="scientific">Trichophyton verrucosum (strain HKI 0517)</name>
    <dbReference type="NCBI Taxonomy" id="663202"/>
    <lineage>
        <taxon>Eukaryota</taxon>
        <taxon>Fungi</taxon>
        <taxon>Dikarya</taxon>
        <taxon>Ascomycota</taxon>
        <taxon>Pezizomycotina</taxon>
        <taxon>Eurotiomycetes</taxon>
        <taxon>Eurotiomycetidae</taxon>
        <taxon>Onygenales</taxon>
        <taxon>Arthrodermataceae</taxon>
        <taxon>Trichophyton</taxon>
    </lineage>
</organism>
<proteinExistence type="inferred from homology"/>
<evidence type="ECO:0000250" key="1"/>
<evidence type="ECO:0000255" key="2"/>
<evidence type="ECO:0000255" key="3">
    <source>
        <dbReference type="PROSITE-ProRule" id="PRU10084"/>
    </source>
</evidence>
<evidence type="ECO:0000305" key="4"/>
<protein>
    <recommendedName>
        <fullName>Probable dipeptidyl peptidase 4</fullName>
        <ecNumber>3.4.14.5</ecNumber>
    </recommendedName>
    <alternativeName>
        <fullName>Dipeptidyl peptidase IV</fullName>
        <shortName>DPP IV</shortName>
        <shortName>DppIV</shortName>
    </alternativeName>
</protein>
<sequence>MKTSQFLSLLLLAGIAQAIVPPREPRPPTGGGNKLLTYKECVPRATISPRSTSLAWINSDEDGQYISQSDDGALILQNIVTNTNKTLVAADKVPKGYYDYWFKPDLSAVLWATNYTKQYRHSYFANYFILDIEKGSLTPLAQDQAGDIQYAQWSPMDNSIAYVRGNDLYIWNNGKTKRITENGGPDIFNGVPDWVYEEEIFGDRFALWFSPDGEYLAYLRFNETGVPTYTIPYYKNKQKIAPAYPRELEIRYPKVSAKNPTVQFHLLNIASSQETTIPVTAFPENDLVIGEVAWLSSGHDSVAYRAFNRVQDREKIVSVKVESKESKVIRERDGTDGWIDNLLSMSYIGDVNGKEYYVDISDASGWAHIYLYPVDGGKEIALTTGEWEVVAILKVDTMKKLIYFTSTKYHSTTRHVYSVSYDTKVMTPLVNDKEAAYYTASFSAKGGYYILSYQGPNVPYQELYSTKDSKKPLKTITSNDALLEKLKEYKLPKVSFFEIKLPSGETLNVKQRLPPNFNPHKKYPVLFTPYGGPGAQEVSQAWNSLDFKSYITSDPELEYVTWTVDNRGTGYKGRKFRSAVAKRLGFLEPQDQVFAAKELLKNRWADKDHIGIWGWSYGGFLTAKTLETDSGVFTFGISTAPVSDFRLYDSMYTERYMKTVELNADGCDDNVHFQNAAVLSNTLMNGGVTADKLTTQWFTDSDHGIRYDMDSTYQYKQLAKMVYDQKQRRPERPPMHQWSKRVLAALFGERAEE</sequence>
<comment type="function">
    <text evidence="1">Extracellular dipeptidyl-peptidase which removes N-terminal dipeptides sequentially from polypeptides having unsubstituted N-termini provided that the penultimate residue is proline. Contributes to pathogenicity (By similarity).</text>
</comment>
<comment type="catalytic activity">
    <reaction evidence="3">
        <text>Release of an N-terminal dipeptide, Xaa-Yaa-|-Zaa-, from a polypeptide, preferentially when Yaa is Pro, provided Zaa is neither Pro nor hydroxyproline.</text>
        <dbReference type="EC" id="3.4.14.5"/>
    </reaction>
</comment>
<comment type="subcellular location">
    <subcellularLocation>
        <location evidence="1">Secreted</location>
    </subcellularLocation>
</comment>
<comment type="similarity">
    <text evidence="4">Belongs to the peptidase S9B family.</text>
</comment>
<feature type="signal peptide" evidence="2">
    <location>
        <begin position="1"/>
        <end position="18"/>
    </location>
</feature>
<feature type="chain" id="PRO_0000397815" description="Probable dipeptidyl peptidase 4">
    <location>
        <begin position="19"/>
        <end position="753"/>
    </location>
</feature>
<feature type="active site" description="Charge relay system" evidence="3">
    <location>
        <position position="616"/>
    </location>
</feature>
<feature type="active site" description="Charge relay system" evidence="3">
    <location>
        <position position="668"/>
    </location>
</feature>
<feature type="active site" description="Charge relay system" evidence="3">
    <location>
        <position position="703"/>
    </location>
</feature>
<feature type="glycosylation site" description="N-linked (GlcNAc...) asparagine" evidence="2">
    <location>
        <position position="84"/>
    </location>
</feature>
<feature type="glycosylation site" description="N-linked (GlcNAc...) asparagine" evidence="2">
    <location>
        <position position="114"/>
    </location>
</feature>
<feature type="glycosylation site" description="N-linked (GlcNAc...) asparagine" evidence="2">
    <location>
        <position position="222"/>
    </location>
</feature>
<reference key="1">
    <citation type="journal article" date="2011" name="Genome Biol.">
        <title>Comparative and functional genomics provide insights into the pathogenicity of dermatophytic fungi.</title>
        <authorList>
            <person name="Burmester A."/>
            <person name="Shelest E."/>
            <person name="Gloeckner G."/>
            <person name="Heddergott C."/>
            <person name="Schindler S."/>
            <person name="Staib P."/>
            <person name="Heidel A."/>
            <person name="Felder M."/>
            <person name="Petzold A."/>
            <person name="Szafranski K."/>
            <person name="Feuermann M."/>
            <person name="Pedruzzi I."/>
            <person name="Priebe S."/>
            <person name="Groth M."/>
            <person name="Winkler R."/>
            <person name="Li W."/>
            <person name="Kniemeyer O."/>
            <person name="Schroeckh V."/>
            <person name="Hertweck C."/>
            <person name="Hube B."/>
            <person name="White T.C."/>
            <person name="Platzer M."/>
            <person name="Guthke R."/>
            <person name="Heitman J."/>
            <person name="Woestemeyer J."/>
            <person name="Zipfel P.F."/>
            <person name="Monod M."/>
            <person name="Brakhage A.A."/>
        </authorList>
    </citation>
    <scope>NUCLEOTIDE SEQUENCE [LARGE SCALE GENOMIC DNA]</scope>
    <source>
        <strain>HKI 0517</strain>
    </source>
</reference>
<name>DPP4_TRIVH</name>
<accession>D4CZ59</accession>
<dbReference type="EC" id="3.4.14.5"/>
<dbReference type="EMBL" id="ACYE01000004">
    <property type="protein sequence ID" value="EFE45114.1"/>
    <property type="molecule type" value="Genomic_DNA"/>
</dbReference>
<dbReference type="RefSeq" id="XP_003025725.1">
    <property type="nucleotide sequence ID" value="XM_003025679.1"/>
</dbReference>
<dbReference type="SMR" id="D4CZ59"/>
<dbReference type="ESTHER" id="artbc-dpp4">
    <property type="family name" value="DPP4N_Peptidase_S9"/>
</dbReference>
<dbReference type="GlyCosmos" id="D4CZ59">
    <property type="glycosylation" value="3 sites, No reported glycans"/>
</dbReference>
<dbReference type="GeneID" id="9581968"/>
<dbReference type="KEGG" id="tve:TRV_00096"/>
<dbReference type="HOGENOM" id="CLU_006105_0_2_1"/>
<dbReference type="OrthoDB" id="1184at34384"/>
<dbReference type="Proteomes" id="UP000008383">
    <property type="component" value="Unassembled WGS sequence"/>
</dbReference>
<dbReference type="GO" id="GO:0005576">
    <property type="term" value="C:extracellular region"/>
    <property type="evidence" value="ECO:0007669"/>
    <property type="project" value="UniProtKB-SubCell"/>
</dbReference>
<dbReference type="GO" id="GO:0005886">
    <property type="term" value="C:plasma membrane"/>
    <property type="evidence" value="ECO:0007669"/>
    <property type="project" value="TreeGrafter"/>
</dbReference>
<dbReference type="GO" id="GO:0004177">
    <property type="term" value="F:aminopeptidase activity"/>
    <property type="evidence" value="ECO:0007669"/>
    <property type="project" value="UniProtKB-KW"/>
</dbReference>
<dbReference type="GO" id="GO:0008239">
    <property type="term" value="F:dipeptidyl-peptidase activity"/>
    <property type="evidence" value="ECO:0007669"/>
    <property type="project" value="UniProtKB-EC"/>
</dbReference>
<dbReference type="GO" id="GO:0004252">
    <property type="term" value="F:serine-type endopeptidase activity"/>
    <property type="evidence" value="ECO:0007669"/>
    <property type="project" value="InterPro"/>
</dbReference>
<dbReference type="GO" id="GO:0006508">
    <property type="term" value="P:proteolysis"/>
    <property type="evidence" value="ECO:0007669"/>
    <property type="project" value="UniProtKB-KW"/>
</dbReference>
<dbReference type="FunFam" id="2.140.10.30:FF:000003">
    <property type="entry name" value="Probable dipeptidyl peptidase 4"/>
    <property type="match status" value="1"/>
</dbReference>
<dbReference type="Gene3D" id="3.40.50.1820">
    <property type="entry name" value="alpha/beta hydrolase"/>
    <property type="match status" value="1"/>
</dbReference>
<dbReference type="Gene3D" id="2.140.10.30">
    <property type="entry name" value="Dipeptidylpeptidase IV, N-terminal domain"/>
    <property type="match status" value="1"/>
</dbReference>
<dbReference type="InterPro" id="IPR029058">
    <property type="entry name" value="AB_hydrolase_fold"/>
</dbReference>
<dbReference type="InterPro" id="IPR002471">
    <property type="entry name" value="Pept_S9_AS"/>
</dbReference>
<dbReference type="InterPro" id="IPR001375">
    <property type="entry name" value="Peptidase_S9_cat"/>
</dbReference>
<dbReference type="InterPro" id="IPR002469">
    <property type="entry name" value="Peptidase_S9B_N"/>
</dbReference>
<dbReference type="InterPro" id="IPR050278">
    <property type="entry name" value="Serine_Prot_S9B/DPPIV"/>
</dbReference>
<dbReference type="PANTHER" id="PTHR11731:SF162">
    <property type="entry name" value="DIPEPTIDYL PEPTIDASE 4-RELATED"/>
    <property type="match status" value="1"/>
</dbReference>
<dbReference type="PANTHER" id="PTHR11731">
    <property type="entry name" value="PROTEASE FAMILY S9B,C DIPEPTIDYL-PEPTIDASE IV-RELATED"/>
    <property type="match status" value="1"/>
</dbReference>
<dbReference type="Pfam" id="PF00930">
    <property type="entry name" value="DPPIV_N"/>
    <property type="match status" value="1"/>
</dbReference>
<dbReference type="Pfam" id="PF00326">
    <property type="entry name" value="Peptidase_S9"/>
    <property type="match status" value="1"/>
</dbReference>
<dbReference type="SUPFAM" id="SSF53474">
    <property type="entry name" value="alpha/beta-Hydrolases"/>
    <property type="match status" value="1"/>
</dbReference>
<dbReference type="SUPFAM" id="SSF82171">
    <property type="entry name" value="DPP6 N-terminal domain-like"/>
    <property type="match status" value="1"/>
</dbReference>
<dbReference type="PROSITE" id="PS00708">
    <property type="entry name" value="PRO_ENDOPEP_SER"/>
    <property type="match status" value="1"/>
</dbReference>
<gene>
    <name type="primary">DPP4</name>
    <name type="ORF">TRV_00096</name>
</gene>
<keyword id="KW-0031">Aminopeptidase</keyword>
<keyword id="KW-0325">Glycoprotein</keyword>
<keyword id="KW-0378">Hydrolase</keyword>
<keyword id="KW-0645">Protease</keyword>
<keyword id="KW-0964">Secreted</keyword>
<keyword id="KW-0720">Serine protease</keyword>
<keyword id="KW-0732">Signal</keyword>
<keyword id="KW-0843">Virulence</keyword>